<dbReference type="EMBL" id="CP001050">
    <property type="protein sequence ID" value="ACF30926.1"/>
    <property type="molecule type" value="Genomic_DNA"/>
</dbReference>
<dbReference type="RefSeq" id="WP_012504019.1">
    <property type="nucleotide sequence ID" value="NC_011035.1"/>
</dbReference>
<dbReference type="SMR" id="B4RPP9"/>
<dbReference type="KEGG" id="ngk:NGK_2322"/>
<dbReference type="HOGENOM" id="CLU_002472_4_0_4"/>
<dbReference type="Proteomes" id="UP000002564">
    <property type="component" value="Chromosome"/>
</dbReference>
<dbReference type="GO" id="GO:0005829">
    <property type="term" value="C:cytosol"/>
    <property type="evidence" value="ECO:0007669"/>
    <property type="project" value="TreeGrafter"/>
</dbReference>
<dbReference type="GO" id="GO:0005524">
    <property type="term" value="F:ATP binding"/>
    <property type="evidence" value="ECO:0007669"/>
    <property type="project" value="UniProtKB-UniRule"/>
</dbReference>
<dbReference type="GO" id="GO:0140664">
    <property type="term" value="F:ATP-dependent DNA damage sensor activity"/>
    <property type="evidence" value="ECO:0007669"/>
    <property type="project" value="InterPro"/>
</dbReference>
<dbReference type="GO" id="GO:0003684">
    <property type="term" value="F:damaged DNA binding"/>
    <property type="evidence" value="ECO:0007669"/>
    <property type="project" value="UniProtKB-UniRule"/>
</dbReference>
<dbReference type="GO" id="GO:0030983">
    <property type="term" value="F:mismatched DNA binding"/>
    <property type="evidence" value="ECO:0007669"/>
    <property type="project" value="InterPro"/>
</dbReference>
<dbReference type="GO" id="GO:0006298">
    <property type="term" value="P:mismatch repair"/>
    <property type="evidence" value="ECO:0007669"/>
    <property type="project" value="UniProtKB-UniRule"/>
</dbReference>
<dbReference type="FunFam" id="1.10.1420.10:FF:000018">
    <property type="entry name" value="DNA mismatch repair protein MutS"/>
    <property type="match status" value="1"/>
</dbReference>
<dbReference type="FunFam" id="3.40.1170.10:FF:000001">
    <property type="entry name" value="DNA mismatch repair protein MutS"/>
    <property type="match status" value="1"/>
</dbReference>
<dbReference type="FunFam" id="3.40.50.300:FF:000870">
    <property type="entry name" value="MutS protein homolog 4"/>
    <property type="match status" value="1"/>
</dbReference>
<dbReference type="Gene3D" id="1.10.1420.10">
    <property type="match status" value="2"/>
</dbReference>
<dbReference type="Gene3D" id="6.10.140.430">
    <property type="match status" value="1"/>
</dbReference>
<dbReference type="Gene3D" id="3.40.1170.10">
    <property type="entry name" value="DNA repair protein MutS, domain I"/>
    <property type="match status" value="1"/>
</dbReference>
<dbReference type="Gene3D" id="3.30.420.110">
    <property type="entry name" value="MutS, connector domain"/>
    <property type="match status" value="1"/>
</dbReference>
<dbReference type="Gene3D" id="3.40.50.300">
    <property type="entry name" value="P-loop containing nucleotide triphosphate hydrolases"/>
    <property type="match status" value="1"/>
</dbReference>
<dbReference type="HAMAP" id="MF_00096">
    <property type="entry name" value="MutS"/>
    <property type="match status" value="1"/>
</dbReference>
<dbReference type="InterPro" id="IPR005748">
    <property type="entry name" value="DNA_mismatch_repair_MutS"/>
</dbReference>
<dbReference type="InterPro" id="IPR007695">
    <property type="entry name" value="DNA_mismatch_repair_MutS-lik_N"/>
</dbReference>
<dbReference type="InterPro" id="IPR017261">
    <property type="entry name" value="DNA_mismatch_repair_MutS/MSH"/>
</dbReference>
<dbReference type="InterPro" id="IPR000432">
    <property type="entry name" value="DNA_mismatch_repair_MutS_C"/>
</dbReference>
<dbReference type="InterPro" id="IPR007861">
    <property type="entry name" value="DNA_mismatch_repair_MutS_clamp"/>
</dbReference>
<dbReference type="InterPro" id="IPR007696">
    <property type="entry name" value="DNA_mismatch_repair_MutS_core"/>
</dbReference>
<dbReference type="InterPro" id="IPR016151">
    <property type="entry name" value="DNA_mismatch_repair_MutS_N"/>
</dbReference>
<dbReference type="InterPro" id="IPR036187">
    <property type="entry name" value="DNA_mismatch_repair_MutS_sf"/>
</dbReference>
<dbReference type="InterPro" id="IPR007860">
    <property type="entry name" value="DNA_mmatch_repair_MutS_con_dom"/>
</dbReference>
<dbReference type="InterPro" id="IPR045076">
    <property type="entry name" value="MutS"/>
</dbReference>
<dbReference type="InterPro" id="IPR036678">
    <property type="entry name" value="MutS_con_dom_sf"/>
</dbReference>
<dbReference type="InterPro" id="IPR027417">
    <property type="entry name" value="P-loop_NTPase"/>
</dbReference>
<dbReference type="NCBIfam" id="TIGR01070">
    <property type="entry name" value="mutS1"/>
    <property type="match status" value="1"/>
</dbReference>
<dbReference type="NCBIfam" id="NF003810">
    <property type="entry name" value="PRK05399.1"/>
    <property type="match status" value="1"/>
</dbReference>
<dbReference type="PANTHER" id="PTHR11361:SF34">
    <property type="entry name" value="DNA MISMATCH REPAIR PROTEIN MSH1, MITOCHONDRIAL"/>
    <property type="match status" value="1"/>
</dbReference>
<dbReference type="PANTHER" id="PTHR11361">
    <property type="entry name" value="DNA MISMATCH REPAIR PROTEIN MUTS FAMILY MEMBER"/>
    <property type="match status" value="1"/>
</dbReference>
<dbReference type="Pfam" id="PF01624">
    <property type="entry name" value="MutS_I"/>
    <property type="match status" value="1"/>
</dbReference>
<dbReference type="Pfam" id="PF05188">
    <property type="entry name" value="MutS_II"/>
    <property type="match status" value="1"/>
</dbReference>
<dbReference type="Pfam" id="PF05192">
    <property type="entry name" value="MutS_III"/>
    <property type="match status" value="1"/>
</dbReference>
<dbReference type="Pfam" id="PF05190">
    <property type="entry name" value="MutS_IV"/>
    <property type="match status" value="1"/>
</dbReference>
<dbReference type="Pfam" id="PF00488">
    <property type="entry name" value="MutS_V"/>
    <property type="match status" value="1"/>
</dbReference>
<dbReference type="PIRSF" id="PIRSF037677">
    <property type="entry name" value="DNA_mis_repair_Msh6"/>
    <property type="match status" value="1"/>
</dbReference>
<dbReference type="SMART" id="SM00534">
    <property type="entry name" value="MUTSac"/>
    <property type="match status" value="1"/>
</dbReference>
<dbReference type="SMART" id="SM00533">
    <property type="entry name" value="MUTSd"/>
    <property type="match status" value="1"/>
</dbReference>
<dbReference type="SUPFAM" id="SSF55271">
    <property type="entry name" value="DNA repair protein MutS, domain I"/>
    <property type="match status" value="1"/>
</dbReference>
<dbReference type="SUPFAM" id="SSF53150">
    <property type="entry name" value="DNA repair protein MutS, domain II"/>
    <property type="match status" value="1"/>
</dbReference>
<dbReference type="SUPFAM" id="SSF48334">
    <property type="entry name" value="DNA repair protein MutS, domain III"/>
    <property type="match status" value="1"/>
</dbReference>
<dbReference type="SUPFAM" id="SSF52540">
    <property type="entry name" value="P-loop containing nucleoside triphosphate hydrolases"/>
    <property type="match status" value="1"/>
</dbReference>
<organism>
    <name type="scientific">Neisseria gonorrhoeae (strain NCCP11945)</name>
    <dbReference type="NCBI Taxonomy" id="521006"/>
    <lineage>
        <taxon>Bacteria</taxon>
        <taxon>Pseudomonadati</taxon>
        <taxon>Pseudomonadota</taxon>
        <taxon>Betaproteobacteria</taxon>
        <taxon>Neisseriales</taxon>
        <taxon>Neisseriaceae</taxon>
        <taxon>Neisseria</taxon>
    </lineage>
</organism>
<gene>
    <name evidence="1" type="primary">mutS</name>
    <name type="ordered locus">NGK_2322</name>
</gene>
<protein>
    <recommendedName>
        <fullName evidence="1">DNA mismatch repair protein MutS</fullName>
    </recommendedName>
</protein>
<evidence type="ECO:0000255" key="1">
    <source>
        <dbReference type="HAMAP-Rule" id="MF_00096"/>
    </source>
</evidence>
<reference key="1">
    <citation type="journal article" date="2008" name="J. Bacteriol.">
        <title>Complete genome sequence of Neisseria gonorrhoeae NCCP11945.</title>
        <authorList>
            <person name="Chung G.T."/>
            <person name="Yoo J.S."/>
            <person name="Oh H.B."/>
            <person name="Lee Y.S."/>
            <person name="Cha S.H."/>
            <person name="Kim S.J."/>
            <person name="Yoo C.K."/>
        </authorList>
    </citation>
    <scope>NUCLEOTIDE SEQUENCE [LARGE SCALE GENOMIC DNA]</scope>
    <source>
        <strain>NCCP11945</strain>
    </source>
</reference>
<proteinExistence type="inferred from homology"/>
<name>MUTS_NEIG2</name>
<accession>B4RPP9</accession>
<feature type="chain" id="PRO_1000093635" description="DNA mismatch repair protein MutS">
    <location>
        <begin position="1"/>
        <end position="864"/>
    </location>
</feature>
<feature type="binding site" evidence="1">
    <location>
        <begin position="607"/>
        <end position="614"/>
    </location>
    <ligand>
        <name>ATP</name>
        <dbReference type="ChEBI" id="CHEBI:30616"/>
    </ligand>
</feature>
<comment type="function">
    <text evidence="1">This protein is involved in the repair of mismatches in DNA. It is possible that it carries out the mismatch recognition step. This protein has a weak ATPase activity.</text>
</comment>
<comment type="similarity">
    <text evidence="1">Belongs to the DNA mismatch repair MutS family.</text>
</comment>
<keyword id="KW-0067">ATP-binding</keyword>
<keyword id="KW-0227">DNA damage</keyword>
<keyword id="KW-0234">DNA repair</keyword>
<keyword id="KW-0238">DNA-binding</keyword>
<keyword id="KW-0547">Nucleotide-binding</keyword>
<sequence length="864" mass="95175">MSKSAVSPMMQQYLGIKAQHTDKLVFYRMGDFYELFLDDAVEAAKLLDITLTTRGQMDGVPIKMAGVPFHAAEQYLARLVKLGKSVAICEQVGEVGAGKGPVERKVVRIVTPGTLTDSALLEDKETNRIVAVSPDKKYIGLAWASLQSGEFKTKLTTADKLNDELARLQAAEILLPDSKNAPQLQTASGVTRLNAWQFAADAGEKLLTEYFGCQDLRGFGLDSKEHAVSIGAAGALLNYIRLTQNLMPQHLDGLSLETDSQYIGMDAATRRNLEITQTLSGKKTPTLFSILDGCATHMGSRLLALWLHHPLRNRAHIRARQEAVTALESQYEPLQCHLKSIADIERIAARIAVGNARPRDLASLRDSLFELAQIDLSATGSSLLETLKAVFPETLPVAETLKAAVMPEPSVWLKDGNVINHGFHPELDELRRIQNHGDEFLLDLEAKERERTGLSTLKVEFNRVHGFYIELSKTQAEQAPADYQRRQTLKNAERFITPELKAFEDKVLTAQDQALALEKQLFDGVLKNLRTALPQLQKAAKAAAALDVLSTFSALAKERNFVRPEFADYPVVHIENGRHPVVEQQVRHFTANHTDLDHKHRLMLLTGPNMGGKSTYMRQVALIVLLAHTGCFVPADAATIGPVDQIFTRIGASDDLASNRSTFMVEMSETAYILHHATEQIIVLMDEVGRGTSTFDGLALAHAIAEHLLQKNKSFSLFATHYFELTYLPEAHAAAVNMHLSALEQGRDIVFLHQIQPGPAGKSYGIAVAKLAGLPVRALKAAQKHLNGLENQAAANRPQLDIFSTMPSEKGDEPNVDCFVDKAEEKHFEGILAAALENLDPDSLTPREALSELYRLKDLCKSVS</sequence>